<sequence>MFDPKPVLKNLPNLPGVYRMINAQDEVIYVGKARDLKKRVSSYFQKNLPSARTRLMVSNIARIETTVTRSEAEALLLENNLIKGFMPRYNVLFRDDKSYPYIALTGDTFPRLAFHRGAQRKGSSYFGPFPNAVAVRESIQLLQKVFRLRTCENTVFANRSRPCLLHQIERCTAPCVGFISEEDYRRDVMHASLFLQGKEQQVMDELGEKMNEAAEKMEYELAAVYRDRIQSLRQVQAKQFVSDFNVSDADVIACAELEGQWCVNLVMIRGGHHLGDKSFFPKNADGADLETTMEAFLEQHYMAGAIPPLLIVGASLETAALEEVFSEQAGRRIRINTHPIGDKRVWLKMAHTNAQLALSQRIAQQANQQSRLNALREALGLPESTERIECFDISHTMGEATVASCVVFDKGAMQSSEYRRYNITGITPGDDYAAMRDVLTRRYRKVAAGEGKRPDLVFIDGGKGQLGVAVEVLNEVGLPDIQLVGIAKGEERKPGLEQMFFPEREEPVSLKKDHPGLHLLQQIRDEAHRFAITGHRAKRGKARMHSSLEDISGIGAKRRKSLLTRFGGLDGVKNASVDEIAQVDGISHALAQKIYEELH</sequence>
<organism>
    <name type="scientific">Methylobacillus flagellatus (strain ATCC 51484 / DSM 6875 / VKM B-1610 / KT)</name>
    <dbReference type="NCBI Taxonomy" id="265072"/>
    <lineage>
        <taxon>Bacteria</taxon>
        <taxon>Pseudomonadati</taxon>
        <taxon>Pseudomonadota</taxon>
        <taxon>Betaproteobacteria</taxon>
        <taxon>Nitrosomonadales</taxon>
        <taxon>Methylophilaceae</taxon>
        <taxon>Methylobacillus</taxon>
    </lineage>
</organism>
<dbReference type="EMBL" id="CP000284">
    <property type="protein sequence ID" value="ABE50071.1"/>
    <property type="molecule type" value="Genomic_DNA"/>
</dbReference>
<dbReference type="RefSeq" id="WP_011480025.1">
    <property type="nucleotide sequence ID" value="NC_007947.1"/>
</dbReference>
<dbReference type="SMR" id="Q1H0B6"/>
<dbReference type="STRING" id="265072.Mfla_1804"/>
<dbReference type="KEGG" id="mfa:Mfla_1804"/>
<dbReference type="eggNOG" id="COG0322">
    <property type="taxonomic scope" value="Bacteria"/>
</dbReference>
<dbReference type="HOGENOM" id="CLU_014841_3_0_4"/>
<dbReference type="OrthoDB" id="9804933at2"/>
<dbReference type="Proteomes" id="UP000002440">
    <property type="component" value="Chromosome"/>
</dbReference>
<dbReference type="GO" id="GO:0005737">
    <property type="term" value="C:cytoplasm"/>
    <property type="evidence" value="ECO:0007669"/>
    <property type="project" value="UniProtKB-SubCell"/>
</dbReference>
<dbReference type="GO" id="GO:0009380">
    <property type="term" value="C:excinuclease repair complex"/>
    <property type="evidence" value="ECO:0007669"/>
    <property type="project" value="InterPro"/>
</dbReference>
<dbReference type="GO" id="GO:0003677">
    <property type="term" value="F:DNA binding"/>
    <property type="evidence" value="ECO:0007669"/>
    <property type="project" value="UniProtKB-UniRule"/>
</dbReference>
<dbReference type="GO" id="GO:0009381">
    <property type="term" value="F:excinuclease ABC activity"/>
    <property type="evidence" value="ECO:0007669"/>
    <property type="project" value="UniProtKB-UniRule"/>
</dbReference>
<dbReference type="GO" id="GO:0006289">
    <property type="term" value="P:nucleotide-excision repair"/>
    <property type="evidence" value="ECO:0007669"/>
    <property type="project" value="UniProtKB-UniRule"/>
</dbReference>
<dbReference type="GO" id="GO:0009432">
    <property type="term" value="P:SOS response"/>
    <property type="evidence" value="ECO:0007669"/>
    <property type="project" value="UniProtKB-UniRule"/>
</dbReference>
<dbReference type="CDD" id="cd10434">
    <property type="entry name" value="GIY-YIG_UvrC_Cho"/>
    <property type="match status" value="1"/>
</dbReference>
<dbReference type="FunFam" id="1.10.150.20:FF:000005">
    <property type="entry name" value="UvrABC system protein C"/>
    <property type="match status" value="1"/>
</dbReference>
<dbReference type="FunFam" id="3.30.420.340:FF:000001">
    <property type="entry name" value="UvrABC system protein C"/>
    <property type="match status" value="1"/>
</dbReference>
<dbReference type="FunFam" id="3.40.1440.10:FF:000001">
    <property type="entry name" value="UvrABC system protein C"/>
    <property type="match status" value="1"/>
</dbReference>
<dbReference type="Gene3D" id="1.10.150.20">
    <property type="entry name" value="5' to 3' exonuclease, C-terminal subdomain"/>
    <property type="match status" value="1"/>
</dbReference>
<dbReference type="Gene3D" id="3.40.1440.10">
    <property type="entry name" value="GIY-YIG endonuclease"/>
    <property type="match status" value="1"/>
</dbReference>
<dbReference type="Gene3D" id="4.10.860.10">
    <property type="entry name" value="UVR domain"/>
    <property type="match status" value="1"/>
</dbReference>
<dbReference type="Gene3D" id="3.30.420.340">
    <property type="entry name" value="UvrC, RNAse H endonuclease domain"/>
    <property type="match status" value="1"/>
</dbReference>
<dbReference type="HAMAP" id="MF_00203">
    <property type="entry name" value="UvrC"/>
    <property type="match status" value="1"/>
</dbReference>
<dbReference type="InterPro" id="IPR000305">
    <property type="entry name" value="GIY-YIG_endonuc"/>
</dbReference>
<dbReference type="InterPro" id="IPR035901">
    <property type="entry name" value="GIY-YIG_endonuc_sf"/>
</dbReference>
<dbReference type="InterPro" id="IPR047296">
    <property type="entry name" value="GIY-YIG_UvrC_Cho"/>
</dbReference>
<dbReference type="InterPro" id="IPR010994">
    <property type="entry name" value="RuvA_2-like"/>
</dbReference>
<dbReference type="InterPro" id="IPR001943">
    <property type="entry name" value="UVR_dom"/>
</dbReference>
<dbReference type="InterPro" id="IPR036876">
    <property type="entry name" value="UVR_dom_sf"/>
</dbReference>
<dbReference type="InterPro" id="IPR050066">
    <property type="entry name" value="UvrABC_protein_C"/>
</dbReference>
<dbReference type="InterPro" id="IPR004791">
    <property type="entry name" value="UvrC"/>
</dbReference>
<dbReference type="InterPro" id="IPR001162">
    <property type="entry name" value="UvrC_RNase_H_dom"/>
</dbReference>
<dbReference type="InterPro" id="IPR038476">
    <property type="entry name" value="UvrC_RNase_H_dom_sf"/>
</dbReference>
<dbReference type="NCBIfam" id="NF001824">
    <property type="entry name" value="PRK00558.1-5"/>
    <property type="match status" value="1"/>
</dbReference>
<dbReference type="NCBIfam" id="TIGR00194">
    <property type="entry name" value="uvrC"/>
    <property type="match status" value="1"/>
</dbReference>
<dbReference type="PANTHER" id="PTHR30562:SF1">
    <property type="entry name" value="UVRABC SYSTEM PROTEIN C"/>
    <property type="match status" value="1"/>
</dbReference>
<dbReference type="PANTHER" id="PTHR30562">
    <property type="entry name" value="UVRC/OXIDOREDUCTASE"/>
    <property type="match status" value="1"/>
</dbReference>
<dbReference type="Pfam" id="PF01541">
    <property type="entry name" value="GIY-YIG"/>
    <property type="match status" value="1"/>
</dbReference>
<dbReference type="Pfam" id="PF14520">
    <property type="entry name" value="HHH_5"/>
    <property type="match status" value="1"/>
</dbReference>
<dbReference type="Pfam" id="PF02151">
    <property type="entry name" value="UVR"/>
    <property type="match status" value="1"/>
</dbReference>
<dbReference type="Pfam" id="PF22920">
    <property type="entry name" value="UvrC_RNaseH"/>
    <property type="match status" value="1"/>
</dbReference>
<dbReference type="Pfam" id="PF08459">
    <property type="entry name" value="UvrC_RNaseH_dom"/>
    <property type="match status" value="1"/>
</dbReference>
<dbReference type="SMART" id="SM00465">
    <property type="entry name" value="GIYc"/>
    <property type="match status" value="1"/>
</dbReference>
<dbReference type="SUPFAM" id="SSF46600">
    <property type="entry name" value="C-terminal UvrC-binding domain of UvrB"/>
    <property type="match status" value="1"/>
</dbReference>
<dbReference type="SUPFAM" id="SSF82771">
    <property type="entry name" value="GIY-YIG endonuclease"/>
    <property type="match status" value="1"/>
</dbReference>
<dbReference type="SUPFAM" id="SSF47781">
    <property type="entry name" value="RuvA domain 2-like"/>
    <property type="match status" value="1"/>
</dbReference>
<dbReference type="PROSITE" id="PS50164">
    <property type="entry name" value="GIY_YIG"/>
    <property type="match status" value="1"/>
</dbReference>
<dbReference type="PROSITE" id="PS50151">
    <property type="entry name" value="UVR"/>
    <property type="match status" value="1"/>
</dbReference>
<dbReference type="PROSITE" id="PS50165">
    <property type="entry name" value="UVRC"/>
    <property type="match status" value="1"/>
</dbReference>
<evidence type="ECO:0000255" key="1">
    <source>
        <dbReference type="HAMAP-Rule" id="MF_00203"/>
    </source>
</evidence>
<gene>
    <name evidence="1" type="primary">uvrC</name>
    <name type="ordered locus">Mfla_1804</name>
</gene>
<accession>Q1H0B6</accession>
<feature type="chain" id="PRO_0000264911" description="UvrABC system protein C">
    <location>
        <begin position="1"/>
        <end position="599"/>
    </location>
</feature>
<feature type="domain" description="GIY-YIG" evidence="1">
    <location>
        <begin position="13"/>
        <end position="91"/>
    </location>
</feature>
<feature type="domain" description="UVR" evidence="1">
    <location>
        <begin position="200"/>
        <end position="235"/>
    </location>
</feature>
<keyword id="KW-0963">Cytoplasm</keyword>
<keyword id="KW-0227">DNA damage</keyword>
<keyword id="KW-0228">DNA excision</keyword>
<keyword id="KW-0234">DNA repair</keyword>
<keyword id="KW-0267">Excision nuclease</keyword>
<keyword id="KW-1185">Reference proteome</keyword>
<keyword id="KW-0742">SOS response</keyword>
<name>UVRC_METFK</name>
<protein>
    <recommendedName>
        <fullName evidence="1">UvrABC system protein C</fullName>
        <shortName evidence="1">Protein UvrC</shortName>
    </recommendedName>
    <alternativeName>
        <fullName evidence="1">Excinuclease ABC subunit C</fullName>
    </alternativeName>
</protein>
<comment type="function">
    <text evidence="1">The UvrABC repair system catalyzes the recognition and processing of DNA lesions. UvrC both incises the 5' and 3' sides of the lesion. The N-terminal half is responsible for the 3' incision and the C-terminal half is responsible for the 5' incision.</text>
</comment>
<comment type="subunit">
    <text evidence="1">Interacts with UvrB in an incision complex.</text>
</comment>
<comment type="subcellular location">
    <subcellularLocation>
        <location evidence="1">Cytoplasm</location>
    </subcellularLocation>
</comment>
<comment type="similarity">
    <text evidence="1">Belongs to the UvrC family.</text>
</comment>
<proteinExistence type="inferred from homology"/>
<reference key="1">
    <citation type="submission" date="2006-03" db="EMBL/GenBank/DDBJ databases">
        <title>Complete sequence of Methylobacillus flagellatus KT.</title>
        <authorList>
            <consortium name="US DOE Joint Genome Institute"/>
            <person name="Copeland A."/>
            <person name="Lucas S."/>
            <person name="Lapidus A."/>
            <person name="Barry K."/>
            <person name="Detter J.C."/>
            <person name="Glavina del Rio T."/>
            <person name="Hammon N."/>
            <person name="Israni S."/>
            <person name="Dalin E."/>
            <person name="Tice H."/>
            <person name="Pitluck S."/>
            <person name="Brettin T."/>
            <person name="Bruce D."/>
            <person name="Han C."/>
            <person name="Tapia R."/>
            <person name="Saunders E."/>
            <person name="Gilna P."/>
            <person name="Schmutz J."/>
            <person name="Larimer F."/>
            <person name="Land M."/>
            <person name="Kyrpides N."/>
            <person name="Anderson I."/>
            <person name="Richardson P."/>
        </authorList>
    </citation>
    <scope>NUCLEOTIDE SEQUENCE [LARGE SCALE GENOMIC DNA]</scope>
    <source>
        <strain>ATCC 51484 / DSM 6875 / VKM B-1610 / KT</strain>
    </source>
</reference>